<sequence length="63" mass="7112">MAKSKNHTAHNQTRKAHRNGIKKPKTYKYPSLKGVDAKFKRNHRYALHGTAKALAKARAEKSA</sequence>
<reference key="1">
    <citation type="journal article" date="2004" name="Proc. Natl. Acad. Sci. U.S.A.">
        <title>The diploid genome sequence of Candida albicans.</title>
        <authorList>
            <person name="Jones T."/>
            <person name="Federspiel N.A."/>
            <person name="Chibana H."/>
            <person name="Dungan J."/>
            <person name="Kalman S."/>
            <person name="Magee B.B."/>
            <person name="Newport G."/>
            <person name="Thorstenson Y.R."/>
            <person name="Agabian N."/>
            <person name="Magee P.T."/>
            <person name="Davis R.W."/>
            <person name="Scherer S."/>
        </authorList>
    </citation>
    <scope>NUCLEOTIDE SEQUENCE [LARGE SCALE GENOMIC DNA]</scope>
    <source>
        <strain>SC5314 / ATCC MYA-2876</strain>
    </source>
</reference>
<reference key="2">
    <citation type="journal article" date="2007" name="Genome Biol.">
        <title>Assembly of the Candida albicans genome into sixteen supercontigs aligned on the eight chromosomes.</title>
        <authorList>
            <person name="van het Hoog M."/>
            <person name="Rast T.J."/>
            <person name="Martchenko M."/>
            <person name="Grindle S."/>
            <person name="Dignard D."/>
            <person name="Hogues H."/>
            <person name="Cuomo C."/>
            <person name="Berriman M."/>
            <person name="Scherer S."/>
            <person name="Magee B.B."/>
            <person name="Whiteway M."/>
            <person name="Chibana H."/>
            <person name="Nantel A."/>
            <person name="Magee P.T."/>
        </authorList>
    </citation>
    <scope>GENOME REANNOTATION</scope>
    <source>
        <strain>SC5314 / ATCC MYA-2876</strain>
    </source>
</reference>
<reference key="3">
    <citation type="journal article" date="2013" name="Genome Biol.">
        <title>Assembly of a phased diploid Candida albicans genome facilitates allele-specific measurements and provides a simple model for repeat and indel structure.</title>
        <authorList>
            <person name="Muzzey D."/>
            <person name="Schwartz K."/>
            <person name="Weissman J.S."/>
            <person name="Sherlock G."/>
        </authorList>
    </citation>
    <scope>NUCLEOTIDE SEQUENCE [LARGE SCALE GENOMIC DNA]</scope>
    <scope>GENOME REANNOTATION</scope>
    <source>
        <strain>SC5314 / ATCC MYA-2876</strain>
    </source>
</reference>
<reference evidence="6 7 8" key="4">
    <citation type="journal article" date="2022" name="Sci. Adv.">
        <title>E-site drug specificity of the human pathogen Candida albicans ribosome.</title>
        <authorList>
            <person name="Zgadzay Y."/>
            <person name="Kolosova O."/>
            <person name="Stetsenko A."/>
            <person name="Wu C."/>
            <person name="Bruchlen D."/>
            <person name="Usachev K."/>
            <person name="Validov S."/>
            <person name="Jenner L."/>
            <person name="Rogachev A."/>
            <person name="Yusupova G."/>
            <person name="Sachs M.S."/>
            <person name="Guskov A."/>
            <person name="Yusupov M."/>
        </authorList>
    </citation>
    <scope>STRUCTURE BY ELECTRON MICROSCOPY (2.32 ANGSTROMS) OF THE 80S RIBOSOME</scope>
    <scope>SUBUNIT</scope>
</reference>
<comment type="function">
    <text evidence="5">Component of the ribosome, a large ribonucleoprotein complex responsible for the synthesis of proteins in the cell. The small ribosomal subunit (SSU) binds messenger RNAs (mRNAs) and translates the encoded message by selecting cognate aminoacyl-transfer RNA (tRNA) molecules. The large subunit (LSU) contains the ribosomal catalytic site termed the peptidyl transferase center (PTC), which catalyzes the formation of peptide bonds, thereby polymerizing the amino acids delivered by tRNAs into a polypeptide chain. The nascent polypeptides leave the ribosome through a tunnel in the LSU and interact with protein factors that function in enzymatic processing, targeting, and the membrane insertion of nascent chains at the exit of the ribosomal tunnel.</text>
</comment>
<comment type="subunit">
    <text evidence="2">Component of the large ribosomal subunit (PubMed:35613268). Mature ribosomes consist of a small (40S) and a large (60S) subunit (PubMed:35613268). The 40S subunit contains about 32 different proteins and 1 molecule of RNA (18S) (PubMed:35613268). The 60S subunit contains 45 different proteins and 3 molecules of RNA (25S, 5.8S and 5S) (PubMed:35613268).</text>
</comment>
<comment type="subcellular location">
    <subcellularLocation>
        <location evidence="5">Cytoplasm</location>
    </subcellularLocation>
</comment>
<comment type="similarity">
    <text evidence="4">Belongs to the eukaryotic ribosomal protein eL29 family.</text>
</comment>
<feature type="chain" id="PRO_0000456510" description="Large ribosomal subunit protein eL29">
    <location>
        <begin position="1"/>
        <end position="63"/>
    </location>
</feature>
<feature type="region of interest" description="Disordered" evidence="1">
    <location>
        <begin position="1"/>
        <end position="35"/>
    </location>
</feature>
<feature type="compositionally biased region" description="Basic residues" evidence="1">
    <location>
        <begin position="1"/>
        <end position="26"/>
    </location>
</feature>
<proteinExistence type="evidence at protein level"/>
<protein>
    <recommendedName>
        <fullName evidence="3">Large ribosomal subunit protein eL29</fullName>
    </recommendedName>
    <alternativeName>
        <fullName>60S ribosomal protein L29</fullName>
    </alternativeName>
</protein>
<gene>
    <name evidence="3" type="primary">RPL29</name>
    <name type="ordered locus">orf19.2310.1</name>
    <name type="ORF">CAALFM_C111040WA</name>
</gene>
<accession>A0A1D8PF57</accession>
<name>RL29_CANAL</name>
<keyword id="KW-0002">3D-structure</keyword>
<keyword id="KW-0963">Cytoplasm</keyword>
<keyword id="KW-1185">Reference proteome</keyword>
<keyword id="KW-0687">Ribonucleoprotein</keyword>
<keyword id="KW-0689">Ribosomal protein</keyword>
<evidence type="ECO:0000256" key="1">
    <source>
        <dbReference type="SAM" id="MobiDB-lite"/>
    </source>
</evidence>
<evidence type="ECO:0000269" key="2">
    <source>
    </source>
</evidence>
<evidence type="ECO:0000303" key="3">
    <source>
    </source>
</evidence>
<evidence type="ECO:0000305" key="4"/>
<evidence type="ECO:0000305" key="5">
    <source>
    </source>
</evidence>
<evidence type="ECO:0007744" key="6">
    <source>
        <dbReference type="PDB" id="7PZY"/>
    </source>
</evidence>
<evidence type="ECO:0007744" key="7">
    <source>
        <dbReference type="PDB" id="7Q0F"/>
    </source>
</evidence>
<evidence type="ECO:0007744" key="8">
    <source>
        <dbReference type="PDB" id="7Q0P"/>
    </source>
</evidence>
<organism>
    <name type="scientific">Candida albicans (strain SC5314 / ATCC MYA-2876)</name>
    <name type="common">Yeast</name>
    <dbReference type="NCBI Taxonomy" id="237561"/>
    <lineage>
        <taxon>Eukaryota</taxon>
        <taxon>Fungi</taxon>
        <taxon>Dikarya</taxon>
        <taxon>Ascomycota</taxon>
        <taxon>Saccharomycotina</taxon>
        <taxon>Pichiomycetes</taxon>
        <taxon>Debaryomycetaceae</taxon>
        <taxon>Candida/Lodderomyces clade</taxon>
        <taxon>Candida</taxon>
    </lineage>
</organism>
<dbReference type="EMBL" id="CP017623">
    <property type="protein sequence ID" value="AOW26730.1"/>
    <property type="molecule type" value="Genomic_DNA"/>
</dbReference>
<dbReference type="RefSeq" id="XP_019330696.1">
    <property type="nucleotide sequence ID" value="XM_019475151.1"/>
</dbReference>
<dbReference type="PDB" id="7PZY">
    <property type="method" value="EM"/>
    <property type="resolution" value="2.32 A"/>
    <property type="chains" value="AC=1-63"/>
</dbReference>
<dbReference type="PDB" id="7Q08">
    <property type="method" value="EM"/>
    <property type="resolution" value="2.56 A"/>
    <property type="chains" value="AC=1-63"/>
</dbReference>
<dbReference type="PDB" id="7Q0F">
    <property type="method" value="EM"/>
    <property type="resolution" value="2.64 A"/>
    <property type="chains" value="AC=1-63"/>
</dbReference>
<dbReference type="PDB" id="7Q0P">
    <property type="method" value="EM"/>
    <property type="resolution" value="2.77 A"/>
    <property type="chains" value="AC=1-63"/>
</dbReference>
<dbReference type="PDB" id="7Q0R">
    <property type="method" value="EM"/>
    <property type="resolution" value="2.67 A"/>
    <property type="chains" value="AC=1-63"/>
</dbReference>
<dbReference type="PDB" id="8C3A">
    <property type="method" value="X-ray"/>
    <property type="resolution" value="3.00 A"/>
    <property type="chains" value="AC/BW=1-63"/>
</dbReference>
<dbReference type="PDB" id="8OGJ">
    <property type="method" value="EM"/>
    <property type="resolution" value="3.10 A"/>
    <property type="chains" value="AC=1-63"/>
</dbReference>
<dbReference type="PDB" id="8OH6">
    <property type="method" value="X-ray"/>
    <property type="resolution" value="3.35 A"/>
    <property type="chains" value="AC/BW=1-63"/>
</dbReference>
<dbReference type="PDB" id="8OI5">
    <property type="method" value="X-ray"/>
    <property type="resolution" value="2.90 A"/>
    <property type="chains" value="AC/BW=1-63"/>
</dbReference>
<dbReference type="PDB" id="8OJ3">
    <property type="method" value="X-ray"/>
    <property type="resolution" value="3.50 A"/>
    <property type="chains" value="AC/BW=1-63"/>
</dbReference>
<dbReference type="PDBsum" id="7PZY"/>
<dbReference type="PDBsum" id="7Q08"/>
<dbReference type="PDBsum" id="7Q0F"/>
<dbReference type="PDBsum" id="7Q0P"/>
<dbReference type="PDBsum" id="7Q0R"/>
<dbReference type="PDBsum" id="8C3A"/>
<dbReference type="PDBsum" id="8OGJ"/>
<dbReference type="PDBsum" id="8OH6"/>
<dbReference type="PDBsum" id="8OI5"/>
<dbReference type="PDBsum" id="8OJ3"/>
<dbReference type="EMDB" id="EMD-13737"/>
<dbReference type="EMDB" id="EMD-13741"/>
<dbReference type="EMDB" id="EMD-13744"/>
<dbReference type="EMDB" id="EMD-13749"/>
<dbReference type="EMDB" id="EMD-13750"/>
<dbReference type="SMR" id="A0A1D8PF57"/>
<dbReference type="FunCoup" id="A0A1D8PF57">
    <property type="interactions" value="587"/>
</dbReference>
<dbReference type="STRING" id="237561.A0A1D8PF57"/>
<dbReference type="EnsemblFungi" id="C1_11040W_A-T">
    <property type="protein sequence ID" value="C1_11040W_A-T-p1"/>
    <property type="gene ID" value="C1_11040W_A"/>
</dbReference>
<dbReference type="GeneID" id="30515048"/>
<dbReference type="KEGG" id="cal:CAALFM_C111040WA"/>
<dbReference type="CGD" id="CAL0000175799">
    <property type="gene designation" value="RPL29"/>
</dbReference>
<dbReference type="VEuPathDB" id="FungiDB:C1_11040W_A"/>
<dbReference type="eggNOG" id="KOG3504">
    <property type="taxonomic scope" value="Eukaryota"/>
</dbReference>
<dbReference type="InParanoid" id="A0A1D8PF57"/>
<dbReference type="OMA" id="PRTNKYP"/>
<dbReference type="OrthoDB" id="996720at2759"/>
<dbReference type="Proteomes" id="UP000000559">
    <property type="component" value="Chromosome 1"/>
</dbReference>
<dbReference type="GO" id="GO:0022625">
    <property type="term" value="C:cytosolic large ribosomal subunit"/>
    <property type="evidence" value="ECO:0000318"/>
    <property type="project" value="GO_Central"/>
</dbReference>
<dbReference type="GO" id="GO:0003735">
    <property type="term" value="F:structural constituent of ribosome"/>
    <property type="evidence" value="ECO:0000318"/>
    <property type="project" value="GO_Central"/>
</dbReference>
<dbReference type="GO" id="GO:0002181">
    <property type="term" value="P:cytoplasmic translation"/>
    <property type="evidence" value="ECO:0000318"/>
    <property type="project" value="GO_Central"/>
</dbReference>
<dbReference type="Gene3D" id="6.10.140.1730">
    <property type="match status" value="1"/>
</dbReference>
<dbReference type="InterPro" id="IPR002673">
    <property type="entry name" value="Ribosomal_eL29"/>
</dbReference>
<dbReference type="PANTHER" id="PTHR12884">
    <property type="entry name" value="60S RIBOSOMAL PROTEIN L29"/>
    <property type="match status" value="1"/>
</dbReference>
<dbReference type="PANTHER" id="PTHR12884:SF0">
    <property type="entry name" value="60S RIBOSOMAL PROTEIN L29"/>
    <property type="match status" value="1"/>
</dbReference>
<dbReference type="Pfam" id="PF01779">
    <property type="entry name" value="Ribosomal_L29e"/>
    <property type="match status" value="1"/>
</dbReference>